<protein>
    <recommendedName>
        <fullName>Protein arginine N-methyltransferase 7</fullName>
        <ecNumber>2.1.1.-</ecNumber>
    </recommendedName>
</protein>
<sequence length="647" mass="73326">MFLEKINQKTGEREWVVAEEDYDMAQELARSRFGDMILDFDRNDKFLAGLKTTIAEKKHENTDGKVHVLDIGTGTGLLSLMAAREGADKVTALEVFKPMGDCARHITSNSPWSDKITVISERSTDVSQIGGSRADIIVAEVFDTELIGEGALRTFKEALERLAKPGCRVVPSTGNVYIVPVESHLLKMFNDIPRLNGEKDEEPLGRCSGTAAVFDVQLSEMKTHEFRELSEPIVAFKFDFEHEEKIIFDESFVREAVAHSSGTIDALLMWWDIDMDRNGTTFIDMGPKWKNKNNYAWRDHWMQAVYYLPEKKKVEMNQTFEIVCNHDEFSLWFSNVGKDKSRSYCVCGLHSMLSRQTVYHVNEMFENQKFKDEVDKLSKGLHVATVGEGSFLGLLAAKTAKRVTIIDGNERFRDIFFKYIHYYKLTNVEIIEKVTSLTDSPDIVLAEPFYMSAMNPWNHLRFLYDVEVLKMMHGDELRVEPHMGVLKAIPEKFEDLQNIASDVGTVNGFDLSFFDEISTKARTATDAIVDEQSLWEYAGIVKGDAVEILRFPIDGRVSSQKCVVNIDNMSSSNAIPMWMEWEFGGINLSTGLLSISSAGVPEWNKGYKQGVYFPITALRNDKSLCLHALFDKSTGDINFQFGKSEDS</sequence>
<dbReference type="EC" id="2.1.1.-"/>
<dbReference type="EMBL" id="AL034364">
    <property type="protein sequence ID" value="CAA22252.2"/>
    <property type="molecule type" value="Genomic_DNA"/>
</dbReference>
<dbReference type="PIR" id="T26236">
    <property type="entry name" value="T26236"/>
</dbReference>
<dbReference type="RefSeq" id="NP_492436.2">
    <property type="nucleotide sequence ID" value="NM_060035.4"/>
</dbReference>
<dbReference type="PDB" id="3WST">
    <property type="method" value="X-ray"/>
    <property type="resolution" value="2.39 A"/>
    <property type="chains" value="A/B/C/D/E/F/G/H/I/J/K/L/M/N/O/P/Q/R=1-647"/>
</dbReference>
<dbReference type="PDB" id="3X0D">
    <property type="method" value="X-ray"/>
    <property type="resolution" value="2.15 A"/>
    <property type="chains" value="A=1-647"/>
</dbReference>
<dbReference type="PDBsum" id="3WST"/>
<dbReference type="PDBsum" id="3X0D"/>
<dbReference type="SMR" id="Q9XW42"/>
<dbReference type="BioGRID" id="38159">
    <property type="interactions" value="1"/>
</dbReference>
<dbReference type="FunCoup" id="Q9XW42">
    <property type="interactions" value="2831"/>
</dbReference>
<dbReference type="STRING" id="6239.W06D4.4.1"/>
<dbReference type="PaxDb" id="6239-W06D4.4"/>
<dbReference type="PeptideAtlas" id="Q9XW42"/>
<dbReference type="EnsemblMetazoa" id="W06D4.4.1">
    <property type="protein sequence ID" value="W06D4.4.1"/>
    <property type="gene ID" value="WBGene00012298"/>
</dbReference>
<dbReference type="GeneID" id="172727"/>
<dbReference type="KEGG" id="cel:CELE_W06D4.4"/>
<dbReference type="UCSC" id="W06D4.4.1">
    <property type="organism name" value="c. elegans"/>
</dbReference>
<dbReference type="AGR" id="WB:WBGene00012298"/>
<dbReference type="CTD" id="172727"/>
<dbReference type="WormBase" id="W06D4.4">
    <property type="protein sequence ID" value="CE45537"/>
    <property type="gene ID" value="WBGene00012298"/>
    <property type="gene designation" value="prmt-7"/>
</dbReference>
<dbReference type="eggNOG" id="KOG1501">
    <property type="taxonomic scope" value="Eukaryota"/>
</dbReference>
<dbReference type="GeneTree" id="ENSGT00940000156879"/>
<dbReference type="HOGENOM" id="CLU_015180_0_0_1"/>
<dbReference type="InParanoid" id="Q9XW42"/>
<dbReference type="OMA" id="CHHDEYS"/>
<dbReference type="OrthoDB" id="412876at2759"/>
<dbReference type="PhylomeDB" id="Q9XW42"/>
<dbReference type="BRENDA" id="2.1.1.321">
    <property type="organism ID" value="1045"/>
</dbReference>
<dbReference type="Reactome" id="R-CEL-3214858">
    <property type="pathway name" value="RMTs methylate histone arginines"/>
</dbReference>
<dbReference type="EvolutionaryTrace" id="Q9XW42"/>
<dbReference type="PRO" id="PR:Q9XW42"/>
<dbReference type="Proteomes" id="UP000001940">
    <property type="component" value="Chromosome I"/>
</dbReference>
<dbReference type="Bgee" id="WBGene00012298">
    <property type="expression patterns" value="Expressed in germ line (C elegans) and 4 other cell types or tissues"/>
</dbReference>
<dbReference type="GO" id="GO:0042054">
    <property type="term" value="F:histone methyltransferase activity"/>
    <property type="evidence" value="ECO:0000318"/>
    <property type="project" value="GO_Central"/>
</dbReference>
<dbReference type="GO" id="GO:0016274">
    <property type="term" value="F:protein-arginine N-methyltransferase activity"/>
    <property type="evidence" value="ECO:0000318"/>
    <property type="project" value="GO_Central"/>
</dbReference>
<dbReference type="GO" id="GO:0006338">
    <property type="term" value="P:chromatin remodeling"/>
    <property type="evidence" value="ECO:0000318"/>
    <property type="project" value="GO_Central"/>
</dbReference>
<dbReference type="GO" id="GO:0032259">
    <property type="term" value="P:methylation"/>
    <property type="evidence" value="ECO:0007669"/>
    <property type="project" value="UniProtKB-KW"/>
</dbReference>
<dbReference type="GO" id="GO:0006355">
    <property type="term" value="P:regulation of DNA-templated transcription"/>
    <property type="evidence" value="ECO:0000318"/>
    <property type="project" value="GO_Central"/>
</dbReference>
<dbReference type="CDD" id="cd02440">
    <property type="entry name" value="AdoMet_MTases"/>
    <property type="match status" value="1"/>
</dbReference>
<dbReference type="FunFam" id="2.70.160.11:FF:000014">
    <property type="entry name" value="Protein arginine N-methyltransferase 7"/>
    <property type="match status" value="1"/>
</dbReference>
<dbReference type="FunFam" id="2.70.160.11:FF:000037">
    <property type="entry name" value="Protein arginine N-methyltransferase 7"/>
    <property type="match status" value="1"/>
</dbReference>
<dbReference type="FunFam" id="3.40.50.150:FF:000599">
    <property type="entry name" value="Protein arginine N-methyltransferase 7"/>
    <property type="match status" value="1"/>
</dbReference>
<dbReference type="FunFam" id="3.40.50.150:FF:000774">
    <property type="entry name" value="Protein arginine N-methyltransferase 7"/>
    <property type="match status" value="1"/>
</dbReference>
<dbReference type="Gene3D" id="2.70.160.11">
    <property type="entry name" value="Hnrnp arginine n-methyltransferase1"/>
    <property type="match status" value="2"/>
</dbReference>
<dbReference type="Gene3D" id="3.40.50.150">
    <property type="entry name" value="Vaccinia Virus protein VP39"/>
    <property type="match status" value="2"/>
</dbReference>
<dbReference type="InterPro" id="IPR025799">
    <property type="entry name" value="Arg_MeTrfase"/>
</dbReference>
<dbReference type="InterPro" id="IPR014644">
    <property type="entry name" value="MeTrfase_PRMT7"/>
</dbReference>
<dbReference type="InterPro" id="IPR055135">
    <property type="entry name" value="PRMT_dom"/>
</dbReference>
<dbReference type="InterPro" id="IPR029063">
    <property type="entry name" value="SAM-dependent_MTases_sf"/>
</dbReference>
<dbReference type="PANTHER" id="PTHR11006">
    <property type="entry name" value="PROTEIN ARGININE N-METHYLTRANSFERASE"/>
    <property type="match status" value="1"/>
</dbReference>
<dbReference type="PANTHER" id="PTHR11006:SF4">
    <property type="entry name" value="PROTEIN ARGININE N-METHYLTRANSFERASE 7"/>
    <property type="match status" value="1"/>
</dbReference>
<dbReference type="Pfam" id="PF06325">
    <property type="entry name" value="PrmA"/>
    <property type="match status" value="1"/>
</dbReference>
<dbReference type="Pfam" id="PF22528">
    <property type="entry name" value="PRMT_C"/>
    <property type="match status" value="1"/>
</dbReference>
<dbReference type="PIRSF" id="PIRSF036946">
    <property type="entry name" value="Arg_N-mtase"/>
    <property type="match status" value="1"/>
</dbReference>
<dbReference type="SUPFAM" id="SSF53335">
    <property type="entry name" value="S-adenosyl-L-methionine-dependent methyltransferases"/>
    <property type="match status" value="2"/>
</dbReference>
<dbReference type="PROSITE" id="PS51678">
    <property type="entry name" value="SAM_MT_PRMT"/>
    <property type="match status" value="2"/>
</dbReference>
<name>ANM7_CAEEL</name>
<keyword id="KW-0002">3D-structure</keyword>
<keyword id="KW-0489">Methyltransferase</keyword>
<keyword id="KW-1185">Reference proteome</keyword>
<keyword id="KW-0677">Repeat</keyword>
<keyword id="KW-0949">S-adenosyl-L-methionine</keyword>
<keyword id="KW-0808">Transferase</keyword>
<feature type="chain" id="PRO_0000373907" description="Protein arginine N-methyltransferase 7">
    <location>
        <begin position="1"/>
        <end position="647"/>
    </location>
</feature>
<feature type="domain" description="SAM-dependent MTase PRMT-type 1" evidence="2">
    <location>
        <begin position="12"/>
        <end position="332"/>
    </location>
</feature>
<feature type="domain" description="SAM-dependent MTase PRMT-type 2" evidence="2">
    <location>
        <begin position="337"/>
        <end position="647"/>
    </location>
</feature>
<feature type="active site" evidence="1">
    <location>
        <position position="140"/>
    </location>
</feature>
<feature type="active site" evidence="1">
    <location>
        <position position="149"/>
    </location>
</feature>
<feature type="strand" evidence="3">
    <location>
        <begin position="3"/>
        <end position="6"/>
    </location>
</feature>
<feature type="turn" evidence="3">
    <location>
        <begin position="8"/>
        <end position="10"/>
    </location>
</feature>
<feature type="strand" evidence="3">
    <location>
        <begin position="13"/>
        <end position="16"/>
    </location>
</feature>
<feature type="helix" evidence="3">
    <location>
        <begin position="19"/>
        <end position="21"/>
    </location>
</feature>
<feature type="helix" evidence="4">
    <location>
        <begin position="22"/>
        <end position="30"/>
    </location>
</feature>
<feature type="turn" evidence="4">
    <location>
        <begin position="31"/>
        <end position="35"/>
    </location>
</feature>
<feature type="helix" evidence="4">
    <location>
        <begin position="36"/>
        <end position="38"/>
    </location>
</feature>
<feature type="helix" evidence="4">
    <location>
        <begin position="40"/>
        <end position="60"/>
    </location>
</feature>
<feature type="strand" evidence="3">
    <location>
        <begin position="61"/>
        <end position="63"/>
    </location>
</feature>
<feature type="strand" evidence="4">
    <location>
        <begin position="67"/>
        <end position="72"/>
    </location>
</feature>
<feature type="helix" evidence="4">
    <location>
        <begin position="77"/>
        <end position="84"/>
    </location>
</feature>
<feature type="strand" evidence="4">
    <location>
        <begin position="88"/>
        <end position="93"/>
    </location>
</feature>
<feature type="helix" evidence="4">
    <location>
        <begin position="97"/>
        <end position="108"/>
    </location>
</feature>
<feature type="turn" evidence="4">
    <location>
        <begin position="111"/>
        <end position="115"/>
    </location>
</feature>
<feature type="strand" evidence="4">
    <location>
        <begin position="116"/>
        <end position="119"/>
    </location>
</feature>
<feature type="turn" evidence="4">
    <location>
        <begin position="123"/>
        <end position="125"/>
    </location>
</feature>
<feature type="strand" evidence="4">
    <location>
        <begin position="130"/>
        <end position="132"/>
    </location>
</feature>
<feature type="strand" evidence="4">
    <location>
        <begin position="134"/>
        <end position="139"/>
    </location>
</feature>
<feature type="helix" evidence="4">
    <location>
        <begin position="151"/>
        <end position="161"/>
    </location>
</feature>
<feature type="strand" evidence="4">
    <location>
        <begin position="163"/>
        <end position="171"/>
    </location>
</feature>
<feature type="strand" evidence="4">
    <location>
        <begin position="173"/>
        <end position="182"/>
    </location>
</feature>
<feature type="helix" evidence="4">
    <location>
        <begin position="184"/>
        <end position="187"/>
    </location>
</feature>
<feature type="turn" evidence="4">
    <location>
        <begin position="188"/>
        <end position="190"/>
    </location>
</feature>
<feature type="helix" evidence="4">
    <location>
        <begin position="218"/>
        <end position="220"/>
    </location>
</feature>
<feature type="helix" evidence="4">
    <location>
        <begin position="223"/>
        <end position="225"/>
    </location>
</feature>
<feature type="strand" evidence="4">
    <location>
        <begin position="233"/>
        <end position="239"/>
    </location>
</feature>
<feature type="helix" evidence="4">
    <location>
        <begin position="243"/>
        <end position="245"/>
    </location>
</feature>
<feature type="strand" evidence="4">
    <location>
        <begin position="248"/>
        <end position="257"/>
    </location>
</feature>
<feature type="strand" evidence="4">
    <location>
        <begin position="266"/>
        <end position="280"/>
    </location>
</feature>
<feature type="strand" evidence="4">
    <location>
        <begin position="282"/>
        <end position="284"/>
    </location>
</feature>
<feature type="helix" evidence="4">
    <location>
        <begin position="288"/>
        <end position="290"/>
    </location>
</feature>
<feature type="strand" evidence="4">
    <location>
        <begin position="292"/>
        <end position="294"/>
    </location>
</feature>
<feature type="strand" evidence="4">
    <location>
        <begin position="299"/>
        <end position="301"/>
    </location>
</feature>
<feature type="strand" evidence="4">
    <location>
        <begin position="303"/>
        <end position="306"/>
    </location>
</feature>
<feature type="strand" evidence="4">
    <location>
        <begin position="319"/>
        <end position="326"/>
    </location>
</feature>
<feature type="strand" evidence="4">
    <location>
        <begin position="331"/>
        <end position="334"/>
    </location>
</feature>
<feature type="strand" evidence="4">
    <location>
        <begin position="346"/>
        <end position="348"/>
    </location>
</feature>
<feature type="helix" evidence="4">
    <location>
        <begin position="349"/>
        <end position="352"/>
    </location>
</feature>
<feature type="helix" evidence="4">
    <location>
        <begin position="355"/>
        <end position="365"/>
    </location>
</feature>
<feature type="helix" evidence="4">
    <location>
        <begin position="368"/>
        <end position="378"/>
    </location>
</feature>
<feature type="strand" evidence="4">
    <location>
        <begin position="381"/>
        <end position="386"/>
    </location>
</feature>
<feature type="helix" evidence="4">
    <location>
        <begin position="392"/>
        <end position="396"/>
    </location>
</feature>
<feature type="turn" evidence="4">
    <location>
        <begin position="397"/>
        <end position="399"/>
    </location>
</feature>
<feature type="strand" evidence="4">
    <location>
        <begin position="401"/>
        <end position="406"/>
    </location>
</feature>
<feature type="helix" evidence="4">
    <location>
        <begin position="410"/>
        <end position="422"/>
    </location>
</feature>
<feature type="strand" evidence="4">
    <location>
        <begin position="428"/>
        <end position="432"/>
    </location>
</feature>
<feature type="helix" evidence="4">
    <location>
        <begin position="434"/>
        <end position="436"/>
    </location>
</feature>
<feature type="strand" evidence="4">
    <location>
        <begin position="442"/>
        <end position="445"/>
    </location>
</feature>
<feature type="helix" evidence="4">
    <location>
        <begin position="456"/>
        <end position="460"/>
    </location>
</feature>
<feature type="helix" evidence="4">
    <location>
        <begin position="461"/>
        <end position="472"/>
    </location>
</feature>
<feature type="strand" evidence="4">
    <location>
        <begin position="478"/>
        <end position="481"/>
    </location>
</feature>
<feature type="strand" evidence="4">
    <location>
        <begin position="483"/>
        <end position="488"/>
    </location>
</feature>
<feature type="strand" evidence="4">
    <location>
        <begin position="491"/>
        <end position="495"/>
    </location>
</feature>
<feature type="helix" evidence="4">
    <location>
        <begin position="496"/>
        <end position="499"/>
    </location>
</feature>
<feature type="helix" evidence="4">
    <location>
        <begin position="512"/>
        <end position="525"/>
    </location>
</feature>
<feature type="strand" evidence="4">
    <location>
        <begin position="528"/>
        <end position="532"/>
    </location>
</feature>
<feature type="helix" evidence="4">
    <location>
        <begin position="534"/>
        <end position="536"/>
    </location>
</feature>
<feature type="strand" evidence="4">
    <location>
        <begin position="539"/>
        <end position="541"/>
    </location>
</feature>
<feature type="strand" evidence="4">
    <location>
        <begin position="546"/>
        <end position="552"/>
    </location>
</feature>
<feature type="strand" evidence="4">
    <location>
        <begin position="560"/>
        <end position="567"/>
    </location>
</feature>
<feature type="helix" evidence="4">
    <location>
        <begin position="569"/>
        <end position="571"/>
    </location>
</feature>
<feature type="strand" evidence="4">
    <location>
        <begin position="574"/>
        <end position="583"/>
    </location>
</feature>
<feature type="strand" evidence="4">
    <location>
        <begin position="586"/>
        <end position="595"/>
    </location>
</feature>
<feature type="strand" evidence="4">
    <location>
        <begin position="601"/>
        <end position="603"/>
    </location>
</feature>
<feature type="strand" evidence="4">
    <location>
        <begin position="609"/>
        <end position="612"/>
    </location>
</feature>
<feature type="helix" evidence="4">
    <location>
        <begin position="616"/>
        <end position="618"/>
    </location>
</feature>
<feature type="strand" evidence="4">
    <location>
        <begin position="622"/>
        <end position="630"/>
    </location>
</feature>
<feature type="turn" evidence="4">
    <location>
        <begin position="632"/>
        <end position="634"/>
    </location>
</feature>
<feature type="strand" evidence="4">
    <location>
        <begin position="637"/>
        <end position="642"/>
    </location>
</feature>
<organism>
    <name type="scientific">Caenorhabditis elegans</name>
    <dbReference type="NCBI Taxonomy" id="6239"/>
    <lineage>
        <taxon>Eukaryota</taxon>
        <taxon>Metazoa</taxon>
        <taxon>Ecdysozoa</taxon>
        <taxon>Nematoda</taxon>
        <taxon>Chromadorea</taxon>
        <taxon>Rhabditida</taxon>
        <taxon>Rhabditina</taxon>
        <taxon>Rhabditomorpha</taxon>
        <taxon>Rhabditoidea</taxon>
        <taxon>Rhabditidae</taxon>
        <taxon>Peloderinae</taxon>
        <taxon>Caenorhabditis</taxon>
    </lineage>
</organism>
<evidence type="ECO:0000250" key="1"/>
<evidence type="ECO:0000255" key="2">
    <source>
        <dbReference type="PROSITE-ProRule" id="PRU01015"/>
    </source>
</evidence>
<evidence type="ECO:0007829" key="3">
    <source>
        <dbReference type="PDB" id="3WST"/>
    </source>
</evidence>
<evidence type="ECO:0007829" key="4">
    <source>
        <dbReference type="PDB" id="3X0D"/>
    </source>
</evidence>
<gene>
    <name type="primary">prmt-7</name>
    <name type="synonym">pmrt-2</name>
    <name type="ORF">W06D4.4</name>
</gene>
<accession>Q9XW42</accession>
<reference key="1">
    <citation type="journal article" date="1998" name="Science">
        <title>Genome sequence of the nematode C. elegans: a platform for investigating biology.</title>
        <authorList>
            <consortium name="The C. elegans sequencing consortium"/>
        </authorList>
    </citation>
    <scope>NUCLEOTIDE SEQUENCE [LARGE SCALE GENOMIC DNA]</scope>
    <source>
        <strain>Bristol N2</strain>
    </source>
</reference>
<reference key="2">
    <citation type="journal article" date="2009" name="PLoS Genet.">
        <title>Caenorhabditis elegans protein arginine methyltransferase PRMT-5 negatively regulates DNA damage-induced apoptosis.</title>
        <authorList>
            <person name="Yang M."/>
            <person name="Sun J."/>
            <person name="Sun X."/>
            <person name="Shen Q."/>
            <person name="Gao Z."/>
            <person name="Yang C."/>
        </authorList>
    </citation>
    <scope>IDENTIFICATION</scope>
</reference>
<comment type="function">
    <text evidence="1">Arginine methyltransferase that can both catalyze the formation of omega-N monomethylarginine (MMA) and symmetrical dimethylarginine (sDMA).</text>
</comment>
<comment type="similarity">
    <text evidence="2">Belongs to the class I-like SAM-binding methyltransferase superfamily. Protein arginine N-methyltransferase family. PRMT7 subfamily.</text>
</comment>
<proteinExistence type="evidence at protein level"/>